<accession>G3XRG4</accession>
<reference key="1">
    <citation type="journal article" date="2011" name="Genome Res.">
        <title>Comparative genomics of citric-acid-producing Aspergillus niger ATCC 1015 versus enzyme-producing CBS 513.88.</title>
        <authorList>
            <person name="Andersen M.R."/>
            <person name="Salazar M.P."/>
            <person name="Schaap P.J."/>
            <person name="van de Vondervoort P.J.I."/>
            <person name="Culley D."/>
            <person name="Thykaer J."/>
            <person name="Frisvad J.C."/>
            <person name="Nielsen K.F."/>
            <person name="Albang R."/>
            <person name="Albermann K."/>
            <person name="Berka R.M."/>
            <person name="Braus G.H."/>
            <person name="Braus-Stromeyer S.A."/>
            <person name="Corrochano L.M."/>
            <person name="Dai Z."/>
            <person name="van Dijck P.W.M."/>
            <person name="Hofmann G."/>
            <person name="Lasure L.L."/>
            <person name="Magnuson J.K."/>
            <person name="Menke H."/>
            <person name="Meijer M."/>
            <person name="Meijer S.L."/>
            <person name="Nielsen J.B."/>
            <person name="Nielsen M.L."/>
            <person name="van Ooyen A.J.J."/>
            <person name="Pel H.J."/>
            <person name="Poulsen L."/>
            <person name="Samson R.A."/>
            <person name="Stam H."/>
            <person name="Tsang A."/>
            <person name="van den Brink J.M."/>
            <person name="Atkins A."/>
            <person name="Aerts A."/>
            <person name="Shapiro H."/>
            <person name="Pangilinan J."/>
            <person name="Salamov A."/>
            <person name="Lou Y."/>
            <person name="Lindquist E."/>
            <person name="Lucas S."/>
            <person name="Grimwood J."/>
            <person name="Grigoriev I.V."/>
            <person name="Kubicek C.P."/>
            <person name="Martinez D."/>
            <person name="van Peij N.N.M.E."/>
            <person name="Roubos J.A."/>
            <person name="Nielsen J."/>
            <person name="Baker S.E."/>
        </authorList>
    </citation>
    <scope>NUCLEOTIDE SEQUENCE [LARGE SCALE GENOMIC DNA]</scope>
    <source>
        <strain>ATCC 1015 / CBS 113.46 / FGSC A1144 / LSHB Ac4 / NCTC 3858a / NRRL 328 / USDA 3528.7</strain>
    </source>
</reference>
<reference key="2">
    <citation type="journal article" date="2015" name="G3 (Bethesda)">
        <title>Identification of a classical mutant in the industrial host Aspergillus niger by systems genetics: laeA is required for citric acid production and regulates the formation of some secondary metabolites.</title>
        <authorList>
            <person name="Niu J."/>
            <person name="Arentshorst M."/>
            <person name="Nair P.D."/>
            <person name="Dai Z."/>
            <person name="Baker S.E."/>
            <person name="Frisvad J.C."/>
            <person name="Nielsen K.F."/>
            <person name="Punt P.J."/>
            <person name="Ram A.F."/>
        </authorList>
    </citation>
    <scope>FUNCTION</scope>
    <scope>DISRUPTION PHENOTYPE</scope>
</reference>
<dbReference type="EC" id="2.1.1.-" evidence="1"/>
<dbReference type="EMBL" id="ACJE01000004">
    <property type="protein sequence ID" value="EHA27020.1"/>
    <property type="molecule type" value="Genomic_DNA"/>
</dbReference>
<dbReference type="SMR" id="G3XRG4"/>
<dbReference type="STRING" id="380704.G3XRG4"/>
<dbReference type="VEuPathDB" id="FungiDB:ASPNIDRAFT2_170198"/>
<dbReference type="HOGENOM" id="CLU_010595_2_0_1"/>
<dbReference type="OrthoDB" id="53777at5052"/>
<dbReference type="Proteomes" id="UP000009038">
    <property type="component" value="Unassembled WGS sequence"/>
</dbReference>
<dbReference type="GO" id="GO:0005634">
    <property type="term" value="C:nucleus"/>
    <property type="evidence" value="ECO:0007669"/>
    <property type="project" value="UniProtKB-SubCell"/>
</dbReference>
<dbReference type="GO" id="GO:0008168">
    <property type="term" value="F:methyltransferase activity"/>
    <property type="evidence" value="ECO:0007669"/>
    <property type="project" value="UniProtKB-KW"/>
</dbReference>
<dbReference type="GO" id="GO:0032259">
    <property type="term" value="P:methylation"/>
    <property type="evidence" value="ECO:0007669"/>
    <property type="project" value="UniProtKB-KW"/>
</dbReference>
<dbReference type="GO" id="GO:0030435">
    <property type="term" value="P:sporulation resulting in formation of a cellular spore"/>
    <property type="evidence" value="ECO:0007669"/>
    <property type="project" value="UniProtKB-KW"/>
</dbReference>
<dbReference type="CDD" id="cd02440">
    <property type="entry name" value="AdoMet_MTases"/>
    <property type="match status" value="1"/>
</dbReference>
<dbReference type="Gene3D" id="3.40.50.150">
    <property type="entry name" value="Vaccinia Virus protein VP39"/>
    <property type="match status" value="1"/>
</dbReference>
<dbReference type="InterPro" id="IPR029063">
    <property type="entry name" value="SAM-dependent_MTases_sf"/>
</dbReference>
<dbReference type="PANTHER" id="PTHR43591">
    <property type="entry name" value="METHYLTRANSFERASE"/>
    <property type="match status" value="1"/>
</dbReference>
<dbReference type="PANTHER" id="PTHR43591:SF30">
    <property type="entry name" value="PROTEIN-METHIONINE METHYLTRANSFERASE LAEA"/>
    <property type="match status" value="1"/>
</dbReference>
<dbReference type="Pfam" id="PF13489">
    <property type="entry name" value="Methyltransf_23"/>
    <property type="match status" value="1"/>
</dbReference>
<dbReference type="SUPFAM" id="SSF53335">
    <property type="entry name" value="S-adenosyl-L-methionine-dependent methyltransferases"/>
    <property type="match status" value="1"/>
</dbReference>
<comment type="function">
    <text evidence="1 3">Methyltransferase that performs automethylation (By similarity). No other methyl-accepting substrate has been identified yet (By similarity). Component of the velvet transcription factor complex that acts as a global regulator for secondary metabolite gene expression (PubMed:26566947). Controls the expression of the citric acid, demethylkotanin, orlandin, asperrubrol, tensidol B, atromentin and JBIR8 gene clusters (PubMed:26566947). Also represses the expression of genes related to the production of BMS-192548 and aspernigrin A (PubMed:26566947).</text>
</comment>
<comment type="catalytic activity">
    <reaction evidence="1">
        <text>L-methionyl-[protein] + S-adenosyl-L-methionine = S-methyl-L-methionyl-[protein] + S-adenosyl-L-homocysteine</text>
        <dbReference type="Rhea" id="RHEA:60560"/>
        <dbReference type="Rhea" id="RHEA-COMP:12313"/>
        <dbReference type="Rhea" id="RHEA-COMP:15592"/>
        <dbReference type="ChEBI" id="CHEBI:16044"/>
        <dbReference type="ChEBI" id="CHEBI:57856"/>
        <dbReference type="ChEBI" id="CHEBI:59789"/>
        <dbReference type="ChEBI" id="CHEBI:142742"/>
    </reaction>
    <physiologicalReaction direction="left-to-right" evidence="1">
        <dbReference type="Rhea" id="RHEA:60561"/>
    </physiologicalReaction>
</comment>
<comment type="subunit">
    <text evidence="1">Component of the heterotrimeric velvet complex composed of laeA, veA and velB; VeA acting as a bridging protein between laeA and velB (By similarity).</text>
</comment>
<comment type="subcellular location">
    <subcellularLocation>
        <location evidence="1">Nucleus</location>
    </subcellularLocation>
</comment>
<comment type="disruption phenotype">
    <text evidence="3">Results in a complete absence of citrate production (PubMed:26566947).</text>
</comment>
<comment type="similarity">
    <text evidence="5">Belongs to the methyltransferase superfamily. LaeA methyltransferase family.</text>
</comment>
<evidence type="ECO:0000250" key="1">
    <source>
        <dbReference type="UniProtKB" id="C8VQG9"/>
    </source>
</evidence>
<evidence type="ECO:0000256" key="2">
    <source>
        <dbReference type="SAM" id="MobiDB-lite"/>
    </source>
</evidence>
<evidence type="ECO:0000269" key="3">
    <source>
    </source>
</evidence>
<evidence type="ECO:0000303" key="4">
    <source>
    </source>
</evidence>
<evidence type="ECO:0000305" key="5"/>
<proteinExistence type="inferred from homology"/>
<gene>
    <name evidence="4" type="primary">laeA</name>
    <name type="ORF">ASPNIDRAFT_170198</name>
</gene>
<sequence>MFEISRLLHQPITMASPNRNNYSYQGIESYDSGRSRQNSDAMDIHVITAQEPPREPPDNNDPYDGHGGPAGTSHYSKPPNRWLFYEENGRTYHGYRRGVYPLPCDEQEQDRLDIFHKLFTVARMSESLIYAPHPPNGRFLDLGCGTGIWAIDVAHKYPNAFVAGVDLAPIQPPNHPDNCEFYAPFDFEAPWTLGENSWDLIHLQMGCGSVLGWQNLYKRILRHLQPGAWFEQVEIDFEPRCDDRSLNGLALREWYQYLKQATQDTMRPIAHSSRDTIRHLEEAGFTQIDHQMVGLPLNPWHRDEHEQKVARWYNLAISESIETLSLAPFSRIFHWDLDRIRQITAEVKSQAFNKEIHAYNILHIYQARKPGGPSL</sequence>
<feature type="chain" id="PRO_0000435746" description="Secondary metabolism regulator laeA">
    <location>
        <begin position="1"/>
        <end position="375"/>
    </location>
</feature>
<feature type="region of interest" description="Disordered" evidence="2">
    <location>
        <begin position="15"/>
        <end position="37"/>
    </location>
</feature>
<feature type="region of interest" description="Disordered" evidence="2">
    <location>
        <begin position="50"/>
        <end position="75"/>
    </location>
</feature>
<feature type="compositionally biased region" description="Polar residues" evidence="2">
    <location>
        <begin position="15"/>
        <end position="26"/>
    </location>
</feature>
<keyword id="KW-0489">Methyltransferase</keyword>
<keyword id="KW-0539">Nucleus</keyword>
<keyword id="KW-0949">S-adenosyl-L-methionine</keyword>
<keyword id="KW-0749">Sporulation</keyword>
<keyword id="KW-0804">Transcription</keyword>
<keyword id="KW-0805">Transcription regulation</keyword>
<keyword id="KW-0808">Transferase</keyword>
<organism>
    <name type="scientific">Aspergillus niger (strain ATCC 1015 / CBS 113.46 / FGSC A1144 / LSHB Ac4 / NCTC 3858a / NRRL 328 / USDA 3528.7)</name>
    <dbReference type="NCBI Taxonomy" id="380704"/>
    <lineage>
        <taxon>Eukaryota</taxon>
        <taxon>Fungi</taxon>
        <taxon>Dikarya</taxon>
        <taxon>Ascomycota</taxon>
        <taxon>Pezizomycotina</taxon>
        <taxon>Eurotiomycetes</taxon>
        <taxon>Eurotiomycetidae</taxon>
        <taxon>Eurotiales</taxon>
        <taxon>Aspergillaceae</taxon>
        <taxon>Aspergillus</taxon>
        <taxon>Aspergillus subgen. Circumdati</taxon>
    </lineage>
</organism>
<protein>
    <recommendedName>
        <fullName evidence="5">Secondary metabolism regulator laeA</fullName>
    </recommendedName>
    <alternativeName>
        <fullName evidence="5">Methyltransferase laeA</fullName>
        <ecNumber evidence="1">2.1.1.-</ecNumber>
    </alternativeName>
    <alternativeName>
        <fullName evidence="5">Velvet complex subunit laeA</fullName>
    </alternativeName>
</protein>
<name>LAEA_ASPNA</name>